<evidence type="ECO:0000255" key="1">
    <source>
        <dbReference type="HAMAP-Rule" id="MF_03159"/>
    </source>
</evidence>
<evidence type="ECO:0000305" key="2"/>
<evidence type="ECO:0000312" key="3">
    <source>
        <dbReference type="EMBL" id="EDV46197.1"/>
    </source>
</evidence>
<keyword id="KW-0413">Isomerase</keyword>
<keyword id="KW-0479">Metal-binding</keyword>
<keyword id="KW-0520">NAD</keyword>
<keyword id="KW-0521">NADP</keyword>
<keyword id="KW-0547">Nucleotide-binding</keyword>
<keyword id="KW-0630">Potassium</keyword>
<gene>
    <name type="ORF">GG18945</name>
</gene>
<name>NNRE_DROER</name>
<sequence length="230" mass="25377">MDLKYLNQKEAIDVDQELFTEYKFSVDQLMELAGLSCAHAVAKCFPAEKHPRILVCCGPGNNGGDGLVAARHLSLMGYTPTIYYPKPTAKPLFENLSHQCQMMGICGVKECPSVESAAANYDLILDALFGFSFKPPVRADFVAVVELMQQTKLPIASVDIPSGWDVEKGKLTECDVEPALLISLTAPKLCARQFRGEHHYLGGRFVPPALQRKYELNLPVYPGNELCVKL</sequence>
<accession>B3NW64</accession>
<organism>
    <name type="scientific">Drosophila erecta</name>
    <name type="common">Fruit fly</name>
    <dbReference type="NCBI Taxonomy" id="7220"/>
    <lineage>
        <taxon>Eukaryota</taxon>
        <taxon>Metazoa</taxon>
        <taxon>Ecdysozoa</taxon>
        <taxon>Arthropoda</taxon>
        <taxon>Hexapoda</taxon>
        <taxon>Insecta</taxon>
        <taxon>Pterygota</taxon>
        <taxon>Neoptera</taxon>
        <taxon>Endopterygota</taxon>
        <taxon>Diptera</taxon>
        <taxon>Brachycera</taxon>
        <taxon>Muscomorpha</taxon>
        <taxon>Ephydroidea</taxon>
        <taxon>Drosophilidae</taxon>
        <taxon>Drosophila</taxon>
        <taxon>Sophophora</taxon>
    </lineage>
</organism>
<protein>
    <recommendedName>
        <fullName evidence="1">NAD(P)H-hydrate epimerase</fullName>
        <ecNumber>5.1.99.6</ecNumber>
    </recommendedName>
    <alternativeName>
        <fullName evidence="1">NAD(P)HX epimerase</fullName>
    </alternativeName>
</protein>
<dbReference type="EC" id="5.1.99.6"/>
<dbReference type="EMBL" id="CH954180">
    <property type="protein sequence ID" value="EDV46197.1"/>
    <property type="status" value="ALT_INIT"/>
    <property type="molecule type" value="Genomic_DNA"/>
</dbReference>
<dbReference type="SMR" id="B3NW64"/>
<dbReference type="EnsemblMetazoa" id="FBtr0138999">
    <property type="protein sequence ID" value="FBpp0137491"/>
    <property type="gene ID" value="FBgn0111151"/>
</dbReference>
<dbReference type="EnsemblMetazoa" id="XM_001977234.3">
    <property type="protein sequence ID" value="XP_001977270.1"/>
    <property type="gene ID" value="LOC6551584"/>
</dbReference>
<dbReference type="GeneID" id="6551584"/>
<dbReference type="KEGG" id="der:6551584"/>
<dbReference type="eggNOG" id="KOG2585">
    <property type="taxonomic scope" value="Eukaryota"/>
</dbReference>
<dbReference type="OrthoDB" id="10064708at2759"/>
<dbReference type="Proteomes" id="UP000008711">
    <property type="component" value="Unassembled WGS sequence"/>
</dbReference>
<dbReference type="GO" id="GO:0005739">
    <property type="term" value="C:mitochondrion"/>
    <property type="evidence" value="ECO:0007669"/>
    <property type="project" value="TreeGrafter"/>
</dbReference>
<dbReference type="GO" id="GO:0046872">
    <property type="term" value="F:metal ion binding"/>
    <property type="evidence" value="ECO:0007669"/>
    <property type="project" value="UniProtKB-KW"/>
</dbReference>
<dbReference type="GO" id="GO:0052856">
    <property type="term" value="F:NAD(P)HX epimerase activity"/>
    <property type="evidence" value="ECO:0007669"/>
    <property type="project" value="UniProtKB-UniRule"/>
</dbReference>
<dbReference type="GO" id="GO:0000166">
    <property type="term" value="F:nucleotide binding"/>
    <property type="evidence" value="ECO:0007669"/>
    <property type="project" value="UniProtKB-KW"/>
</dbReference>
<dbReference type="FunFam" id="3.40.50.10260:FF:000013">
    <property type="entry name" value="NAD(P)H-hydrate epimerase"/>
    <property type="match status" value="1"/>
</dbReference>
<dbReference type="Gene3D" id="3.40.50.10260">
    <property type="entry name" value="YjeF N-terminal domain"/>
    <property type="match status" value="1"/>
</dbReference>
<dbReference type="HAMAP" id="MF_01966">
    <property type="entry name" value="NADHX_epimerase"/>
    <property type="match status" value="1"/>
</dbReference>
<dbReference type="InterPro" id="IPR004443">
    <property type="entry name" value="YjeF_N_dom"/>
</dbReference>
<dbReference type="InterPro" id="IPR036652">
    <property type="entry name" value="YjeF_N_dom_sf"/>
</dbReference>
<dbReference type="InterPro" id="IPR032976">
    <property type="entry name" value="YJEFN_prot_NAXE-like"/>
</dbReference>
<dbReference type="NCBIfam" id="TIGR00197">
    <property type="entry name" value="yjeF_nterm"/>
    <property type="match status" value="1"/>
</dbReference>
<dbReference type="PANTHER" id="PTHR13232">
    <property type="entry name" value="NAD(P)H-HYDRATE EPIMERASE"/>
    <property type="match status" value="1"/>
</dbReference>
<dbReference type="PANTHER" id="PTHR13232:SF10">
    <property type="entry name" value="NAD(P)H-HYDRATE EPIMERASE"/>
    <property type="match status" value="1"/>
</dbReference>
<dbReference type="Pfam" id="PF03853">
    <property type="entry name" value="YjeF_N"/>
    <property type="match status" value="1"/>
</dbReference>
<dbReference type="SUPFAM" id="SSF64153">
    <property type="entry name" value="YjeF N-terminal domain-like"/>
    <property type="match status" value="1"/>
</dbReference>
<dbReference type="PROSITE" id="PS51385">
    <property type="entry name" value="YJEF_N"/>
    <property type="match status" value="1"/>
</dbReference>
<comment type="function">
    <text evidence="1">Catalyzes the epimerization of the S- and R-forms of NAD(P)HX, a damaged form of NAD(P)H that is a result of enzymatic or heat-dependent hydration. This is a prerequisite for the S-specific NAD(P)H-hydrate dehydratase to allow the repair of both epimers of NAD(P)HX.</text>
</comment>
<comment type="catalytic activity">
    <reaction>
        <text>(6R)-NADHX = (6S)-NADHX</text>
        <dbReference type="Rhea" id="RHEA:32215"/>
        <dbReference type="ChEBI" id="CHEBI:64074"/>
        <dbReference type="ChEBI" id="CHEBI:64075"/>
        <dbReference type="EC" id="5.1.99.6"/>
    </reaction>
</comment>
<comment type="catalytic activity">
    <reaction>
        <text>(6R)-NADPHX = (6S)-NADPHX</text>
        <dbReference type="Rhea" id="RHEA:32227"/>
        <dbReference type="ChEBI" id="CHEBI:64076"/>
        <dbReference type="ChEBI" id="CHEBI:64077"/>
        <dbReference type="EC" id="5.1.99.6"/>
    </reaction>
</comment>
<comment type="cofactor">
    <cofactor evidence="1">
        <name>K(+)</name>
        <dbReference type="ChEBI" id="CHEBI:29103"/>
    </cofactor>
    <text evidence="1">Binds 1 potassium ion per subunit.</text>
</comment>
<comment type="similarity">
    <text evidence="1">Belongs to the NnrE/AIBP family.</text>
</comment>
<comment type="sequence caution" evidence="2">
    <conflict type="erroneous initiation">
        <sequence resource="EMBL-CDS" id="EDV46197"/>
    </conflict>
</comment>
<reference evidence="3" key="1">
    <citation type="journal article" date="2007" name="Nature">
        <title>Evolution of genes and genomes on the Drosophila phylogeny.</title>
        <authorList>
            <consortium name="Drosophila 12 genomes consortium"/>
        </authorList>
    </citation>
    <scope>NUCLEOTIDE SEQUENCE [LARGE SCALE GENOMIC DNA]</scope>
    <source>
        <strain evidence="3">Tucson 14021-0224.01</strain>
    </source>
</reference>
<feature type="chain" id="PRO_0000379426" description="NAD(P)H-hydrate epimerase">
    <location>
        <begin position="1"/>
        <end position="230"/>
    </location>
</feature>
<feature type="domain" description="YjeF N-terminal" evidence="1">
    <location>
        <begin position="11"/>
        <end position="218"/>
    </location>
</feature>
<feature type="binding site" evidence="1">
    <location>
        <begin position="61"/>
        <end position="65"/>
    </location>
    <ligand>
        <name>(6S)-NADPHX</name>
        <dbReference type="ChEBI" id="CHEBI:64076"/>
    </ligand>
</feature>
<feature type="binding site" evidence="1">
    <location>
        <position position="62"/>
    </location>
    <ligand>
        <name>K(+)</name>
        <dbReference type="ChEBI" id="CHEBI:29103"/>
    </ligand>
</feature>
<feature type="binding site" evidence="1">
    <location>
        <position position="126"/>
    </location>
    <ligand>
        <name>K(+)</name>
        <dbReference type="ChEBI" id="CHEBI:29103"/>
    </ligand>
</feature>
<feature type="binding site" evidence="1">
    <location>
        <begin position="130"/>
        <end position="136"/>
    </location>
    <ligand>
        <name>(6S)-NADPHX</name>
        <dbReference type="ChEBI" id="CHEBI:64076"/>
    </ligand>
</feature>
<feature type="binding site" evidence="1">
    <location>
        <position position="159"/>
    </location>
    <ligand>
        <name>(6S)-NADPHX</name>
        <dbReference type="ChEBI" id="CHEBI:64076"/>
    </ligand>
</feature>
<feature type="binding site" evidence="1">
    <location>
        <position position="162"/>
    </location>
    <ligand>
        <name>K(+)</name>
        <dbReference type="ChEBI" id="CHEBI:29103"/>
    </ligand>
</feature>
<proteinExistence type="inferred from homology"/>